<organism evidence="3">
    <name type="scientific">Arabidopsis thaliana</name>
    <name type="common">Mouse-ear cress</name>
    <dbReference type="NCBI Taxonomy" id="3702"/>
    <lineage>
        <taxon>Eukaryota</taxon>
        <taxon>Viridiplantae</taxon>
        <taxon>Streptophyta</taxon>
        <taxon>Embryophyta</taxon>
        <taxon>Tracheophyta</taxon>
        <taxon>Spermatophyta</taxon>
        <taxon>Magnoliopsida</taxon>
        <taxon>eudicotyledons</taxon>
        <taxon>Gunneridae</taxon>
        <taxon>Pentapetalae</taxon>
        <taxon>rosids</taxon>
        <taxon>malvids</taxon>
        <taxon>Brassicales</taxon>
        <taxon>Brassicaceae</taxon>
        <taxon>Camelineae</taxon>
        <taxon>Arabidopsis</taxon>
    </lineage>
</organism>
<reference evidence="3" key="1">
    <citation type="journal article" date="1999" name="Nature">
        <title>Sequence and analysis of chromosome 4 of the plant Arabidopsis thaliana.</title>
        <authorList>
            <person name="Mayer K.F.X."/>
            <person name="Schueller C."/>
            <person name="Wambutt R."/>
            <person name="Murphy G."/>
            <person name="Volckaert G."/>
            <person name="Pohl T."/>
            <person name="Duesterhoeft A."/>
            <person name="Stiekema W."/>
            <person name="Entian K.-D."/>
            <person name="Terryn N."/>
            <person name="Harris B."/>
            <person name="Ansorge W."/>
            <person name="Brandt P."/>
            <person name="Grivell L.A."/>
            <person name="Rieger M."/>
            <person name="Weichselgartner M."/>
            <person name="de Simone V."/>
            <person name="Obermaier B."/>
            <person name="Mache R."/>
            <person name="Mueller M."/>
            <person name="Kreis M."/>
            <person name="Delseny M."/>
            <person name="Puigdomenech P."/>
            <person name="Watson M."/>
            <person name="Schmidtheini T."/>
            <person name="Reichert B."/>
            <person name="Portetelle D."/>
            <person name="Perez-Alonso M."/>
            <person name="Boutry M."/>
            <person name="Bancroft I."/>
            <person name="Vos P."/>
            <person name="Hoheisel J."/>
            <person name="Zimmermann W."/>
            <person name="Wedler H."/>
            <person name="Ridley P."/>
            <person name="Langham S.-A."/>
            <person name="McCullagh B."/>
            <person name="Bilham L."/>
            <person name="Robben J."/>
            <person name="van der Schueren J."/>
            <person name="Grymonprez B."/>
            <person name="Chuang Y.-J."/>
            <person name="Vandenbussche F."/>
            <person name="Braeken M."/>
            <person name="Weltjens I."/>
            <person name="Voet M."/>
            <person name="Bastiaens I."/>
            <person name="Aert R."/>
            <person name="Defoor E."/>
            <person name="Weitzenegger T."/>
            <person name="Bothe G."/>
            <person name="Ramsperger U."/>
            <person name="Hilbert H."/>
            <person name="Braun M."/>
            <person name="Holzer E."/>
            <person name="Brandt A."/>
            <person name="Peters S."/>
            <person name="van Staveren M."/>
            <person name="Dirkse W."/>
            <person name="Mooijman P."/>
            <person name="Klein Lankhorst R."/>
            <person name="Rose M."/>
            <person name="Hauf J."/>
            <person name="Koetter P."/>
            <person name="Berneiser S."/>
            <person name="Hempel S."/>
            <person name="Feldpausch M."/>
            <person name="Lamberth S."/>
            <person name="Van den Daele H."/>
            <person name="De Keyser A."/>
            <person name="Buysshaert C."/>
            <person name="Gielen J."/>
            <person name="Villarroel R."/>
            <person name="De Clercq R."/>
            <person name="van Montagu M."/>
            <person name="Rogers J."/>
            <person name="Cronin A."/>
            <person name="Quail M.A."/>
            <person name="Bray-Allen S."/>
            <person name="Clark L."/>
            <person name="Doggett J."/>
            <person name="Hall S."/>
            <person name="Kay M."/>
            <person name="Lennard N."/>
            <person name="McLay K."/>
            <person name="Mayes R."/>
            <person name="Pettett A."/>
            <person name="Rajandream M.A."/>
            <person name="Lyne M."/>
            <person name="Benes V."/>
            <person name="Rechmann S."/>
            <person name="Borkova D."/>
            <person name="Bloecker H."/>
            <person name="Scharfe M."/>
            <person name="Grimm M."/>
            <person name="Loehnert T.-H."/>
            <person name="Dose S."/>
            <person name="de Haan M."/>
            <person name="Maarse A.C."/>
            <person name="Schaefer M."/>
            <person name="Mueller-Auer S."/>
            <person name="Gabel C."/>
            <person name="Fuchs M."/>
            <person name="Fartmann B."/>
            <person name="Granderath K."/>
            <person name="Dauner D."/>
            <person name="Herzl A."/>
            <person name="Neumann S."/>
            <person name="Argiriou A."/>
            <person name="Vitale D."/>
            <person name="Liguori R."/>
            <person name="Piravandi E."/>
            <person name="Massenet O."/>
            <person name="Quigley F."/>
            <person name="Clabauld G."/>
            <person name="Muendlein A."/>
            <person name="Felber R."/>
            <person name="Schnabl S."/>
            <person name="Hiller R."/>
            <person name="Schmidt W."/>
            <person name="Lecharny A."/>
            <person name="Aubourg S."/>
            <person name="Chefdor F."/>
            <person name="Cooke R."/>
            <person name="Berger C."/>
            <person name="Monfort A."/>
            <person name="Casacuberta E."/>
            <person name="Gibbons T."/>
            <person name="Weber N."/>
            <person name="Vandenbol M."/>
            <person name="Bargues M."/>
            <person name="Terol J."/>
            <person name="Torres A."/>
            <person name="Perez-Perez A."/>
            <person name="Purnelle B."/>
            <person name="Bent E."/>
            <person name="Johnson S."/>
            <person name="Tacon D."/>
            <person name="Jesse T."/>
            <person name="Heijnen L."/>
            <person name="Schwarz S."/>
            <person name="Scholler P."/>
            <person name="Heber S."/>
            <person name="Francs P."/>
            <person name="Bielke C."/>
            <person name="Frishman D."/>
            <person name="Haase D."/>
            <person name="Lemcke K."/>
            <person name="Mewes H.-W."/>
            <person name="Stocker S."/>
            <person name="Zaccaria P."/>
            <person name="Bevan M."/>
            <person name="Wilson R.K."/>
            <person name="de la Bastide M."/>
            <person name="Habermann K."/>
            <person name="Parnell L."/>
            <person name="Dedhia N."/>
            <person name="Gnoj L."/>
            <person name="Schutz K."/>
            <person name="Huang E."/>
            <person name="Spiegel L."/>
            <person name="Sekhon M."/>
            <person name="Murray J."/>
            <person name="Sheet P."/>
            <person name="Cordes M."/>
            <person name="Abu-Threideh J."/>
            <person name="Stoneking T."/>
            <person name="Kalicki J."/>
            <person name="Graves T."/>
            <person name="Harmon G."/>
            <person name="Edwards J."/>
            <person name="Latreille P."/>
            <person name="Courtney L."/>
            <person name="Cloud J."/>
            <person name="Abbott A."/>
            <person name="Scott K."/>
            <person name="Johnson D."/>
            <person name="Minx P."/>
            <person name="Bentley D."/>
            <person name="Fulton B."/>
            <person name="Miller N."/>
            <person name="Greco T."/>
            <person name="Kemp K."/>
            <person name="Kramer J."/>
            <person name="Fulton L."/>
            <person name="Mardis E."/>
            <person name="Dante M."/>
            <person name="Pepin K."/>
            <person name="Hillier L.W."/>
            <person name="Nelson J."/>
            <person name="Spieth J."/>
            <person name="Ryan E."/>
            <person name="Andrews S."/>
            <person name="Geisel C."/>
            <person name="Layman D."/>
            <person name="Du H."/>
            <person name="Ali J."/>
            <person name="Berghoff A."/>
            <person name="Jones K."/>
            <person name="Drone K."/>
            <person name="Cotton M."/>
            <person name="Joshu C."/>
            <person name="Antonoiu B."/>
            <person name="Zidanic M."/>
            <person name="Strong C."/>
            <person name="Sun H."/>
            <person name="Lamar B."/>
            <person name="Yordan C."/>
            <person name="Ma P."/>
            <person name="Zhong J."/>
            <person name="Preston R."/>
            <person name="Vil D."/>
            <person name="Shekher M."/>
            <person name="Matero A."/>
            <person name="Shah R."/>
            <person name="Swaby I.K."/>
            <person name="O'Shaughnessy A."/>
            <person name="Rodriguez M."/>
            <person name="Hoffman J."/>
            <person name="Till S."/>
            <person name="Granat S."/>
            <person name="Shohdy N."/>
            <person name="Hasegawa A."/>
            <person name="Hameed A."/>
            <person name="Lodhi M."/>
            <person name="Johnson A."/>
            <person name="Chen E."/>
            <person name="Marra M.A."/>
            <person name="Martienssen R."/>
            <person name="McCombie W.R."/>
        </authorList>
    </citation>
    <scope>NUCLEOTIDE SEQUENCE [LARGE SCALE GENOMIC DNA]</scope>
    <source>
        <strain>cv. Columbia</strain>
    </source>
</reference>
<reference key="2">
    <citation type="journal article" date="2017" name="Plant J.">
        <title>Araport11: a complete reannotation of the Arabidopsis thaliana reference genome.</title>
        <authorList>
            <person name="Cheng C.Y."/>
            <person name="Krishnakumar V."/>
            <person name="Chan A.P."/>
            <person name="Thibaud-Nissen F."/>
            <person name="Schobel S."/>
            <person name="Town C.D."/>
        </authorList>
    </citation>
    <scope>GENOME REANNOTATION</scope>
    <source>
        <strain>cv. Columbia</strain>
    </source>
</reference>
<reference evidence="3" key="3">
    <citation type="journal article" date="2001" name="Plant Mol. Biol.">
        <title>Two large Arabidopsis thaliana gene families are homologous to the Brassica gene superfamily that encodes pollen coat proteins and the male component of the self-incompatibility response.</title>
        <authorList>
            <person name="Vanoosthuyse V."/>
            <person name="Miege C."/>
            <person name="Dumas C."/>
            <person name="Cock J.M."/>
        </authorList>
    </citation>
    <scope>IDENTIFICATION</scope>
</reference>
<reference key="4">
    <citation type="journal article" date="2005" name="Plant Physiol.">
        <title>Genome organization of more than 300 defensin-like genes in Arabidopsis.</title>
        <authorList>
            <person name="Silverstein K.A.T."/>
            <person name="Graham M.A."/>
            <person name="Paape T.D."/>
            <person name="VandenBosch K.A."/>
        </authorList>
    </citation>
    <scope>GENE FAMILY</scope>
</reference>
<accession>P82749</accession>
<protein>
    <recommendedName>
        <fullName>Putative defensin-like protein 142</fullName>
    </recommendedName>
    <alternativeName>
        <fullName>Putative low-molecular-weight cysteine-rich protein 34</fullName>
        <shortName>Protein LCR34</shortName>
    </alternativeName>
</protein>
<comment type="subcellular location">
    <subcellularLocation>
        <location evidence="1">Secreted</location>
    </subcellularLocation>
</comment>
<comment type="similarity">
    <text evidence="3">Belongs to the DEFL family.</text>
</comment>
<dbReference type="EMBL" id="AL049481">
    <property type="status" value="NOT_ANNOTATED_CDS"/>
    <property type="molecule type" value="Genomic_DNA"/>
</dbReference>
<dbReference type="EMBL" id="AL161516">
    <property type="status" value="NOT_ANNOTATED_CDS"/>
    <property type="molecule type" value="Genomic_DNA"/>
</dbReference>
<dbReference type="EMBL" id="CP002687">
    <property type="protein sequence ID" value="AEE82825.1"/>
    <property type="molecule type" value="Genomic_DNA"/>
</dbReference>
<dbReference type="RefSeq" id="NP_001031607.1">
    <property type="nucleotide sequence ID" value="NM_001036530.2"/>
</dbReference>
<dbReference type="PaxDb" id="3702-AT4G09984.1"/>
<dbReference type="ProteomicsDB" id="224189"/>
<dbReference type="EnsemblPlants" id="AT4G09984.1">
    <property type="protein sequence ID" value="AT4G09984.1"/>
    <property type="gene ID" value="AT4G09984"/>
</dbReference>
<dbReference type="GeneID" id="3770009"/>
<dbReference type="Gramene" id="AT4G09984.1">
    <property type="protein sequence ID" value="AT4G09984.1"/>
    <property type="gene ID" value="AT4G09984"/>
</dbReference>
<dbReference type="KEGG" id="ath:AT4G09984"/>
<dbReference type="Araport" id="AT4G09984"/>
<dbReference type="TAIR" id="AT4G09984">
    <property type="gene designation" value="LCR34"/>
</dbReference>
<dbReference type="HOGENOM" id="CLU_182511_0_0_1"/>
<dbReference type="InParanoid" id="P82749"/>
<dbReference type="OMA" id="PEKLTTC"/>
<dbReference type="PRO" id="PR:P82749"/>
<dbReference type="Proteomes" id="UP000006548">
    <property type="component" value="Chromosome 4"/>
</dbReference>
<dbReference type="ExpressionAtlas" id="P82749">
    <property type="expression patterns" value="baseline"/>
</dbReference>
<dbReference type="GO" id="GO:0005576">
    <property type="term" value="C:extracellular region"/>
    <property type="evidence" value="ECO:0007669"/>
    <property type="project" value="UniProtKB-SubCell"/>
</dbReference>
<dbReference type="GO" id="GO:0050832">
    <property type="term" value="P:defense response to fungus"/>
    <property type="evidence" value="ECO:0007669"/>
    <property type="project" value="UniProtKB-KW"/>
</dbReference>
<dbReference type="GO" id="GO:0031640">
    <property type="term" value="P:killing of cells of another organism"/>
    <property type="evidence" value="ECO:0007669"/>
    <property type="project" value="UniProtKB-KW"/>
</dbReference>
<dbReference type="InterPro" id="IPR010851">
    <property type="entry name" value="DEFL"/>
</dbReference>
<dbReference type="PANTHER" id="PTHR34783">
    <property type="entry name" value="DEFENSIN-LIKE PROTEIN 144-RELATED"/>
    <property type="match status" value="1"/>
</dbReference>
<dbReference type="PANTHER" id="PTHR34783:SF1">
    <property type="entry name" value="DEFENSIN-LIKE PROTEIN 144-RELATED"/>
    <property type="match status" value="1"/>
</dbReference>
<dbReference type="Pfam" id="PF07333">
    <property type="entry name" value="SLR1-BP"/>
    <property type="match status" value="1"/>
</dbReference>
<sequence>MKKSFLFTFTVLTIFTILVIGVAPEKLTTCSRFLSQKSGKCVKEDCDRMCKQKWPGKYTVGHCYGQFKDAKRCLCSVCGPDRQPP</sequence>
<evidence type="ECO:0000250" key="1"/>
<evidence type="ECO:0000255" key="2"/>
<evidence type="ECO:0000305" key="3"/>
<name>DF142_ARATH</name>
<keyword id="KW-0929">Antimicrobial</keyword>
<keyword id="KW-1015">Disulfide bond</keyword>
<keyword id="KW-0295">Fungicide</keyword>
<keyword id="KW-0611">Plant defense</keyword>
<keyword id="KW-1185">Reference proteome</keyword>
<keyword id="KW-0964">Secreted</keyword>
<keyword id="KW-0732">Signal</keyword>
<gene>
    <name type="primary">LCR34</name>
    <name type="ordered locus">At4g09984</name>
    <name type="ORF">T5L19</name>
</gene>
<feature type="signal peptide" evidence="2">
    <location>
        <begin position="1"/>
        <end position="24"/>
    </location>
</feature>
<feature type="chain" id="PRO_0000017273" description="Putative defensin-like protein 142">
    <location>
        <begin position="25"/>
        <end position="85"/>
    </location>
</feature>
<feature type="disulfide bond" evidence="1">
    <location>
        <begin position="30"/>
        <end position="78"/>
    </location>
</feature>
<feature type="disulfide bond" evidence="1">
    <location>
        <begin position="41"/>
        <end position="63"/>
    </location>
</feature>
<feature type="disulfide bond" evidence="1">
    <location>
        <begin position="46"/>
        <end position="73"/>
    </location>
</feature>
<feature type="disulfide bond" evidence="1">
    <location>
        <begin position="50"/>
        <end position="75"/>
    </location>
</feature>
<proteinExistence type="inferred from homology"/>